<reference key="1">
    <citation type="journal article" date="2008" name="Nucleic Acids Res.">
        <title>The complete nucleotide sequences of the five genetically distinct plastid genomes of Oenothera, subsection Oenothera: I. Sequence evaluation and plastome evolution.</title>
        <authorList>
            <person name="Greiner S."/>
            <person name="Wang X."/>
            <person name="Rauwolf U."/>
            <person name="Silber M.V."/>
            <person name="Mayer K."/>
            <person name="Meurer J."/>
            <person name="Haberer G."/>
            <person name="Herrmann R.G."/>
        </authorList>
    </citation>
    <scope>NUCLEOTIDE SEQUENCE [LARGE SCALE GENOMIC DNA]</scope>
    <source>
        <strain>cv. Douthat 1</strain>
    </source>
</reference>
<gene>
    <name evidence="1" type="primary">ndhC</name>
</gene>
<comment type="function">
    <text evidence="1">NDH shuttles electrons from NAD(P)H:plastoquinone, via FMN and iron-sulfur (Fe-S) centers, to quinones in the photosynthetic chain and possibly in a chloroplast respiratory chain. The immediate electron acceptor for the enzyme in this species is believed to be plastoquinone. Couples the redox reaction to proton translocation, and thus conserves the redox energy in a proton gradient.</text>
</comment>
<comment type="catalytic activity">
    <reaction evidence="1">
        <text>a plastoquinone + NADH + (n+1) H(+)(in) = a plastoquinol + NAD(+) + n H(+)(out)</text>
        <dbReference type="Rhea" id="RHEA:42608"/>
        <dbReference type="Rhea" id="RHEA-COMP:9561"/>
        <dbReference type="Rhea" id="RHEA-COMP:9562"/>
        <dbReference type="ChEBI" id="CHEBI:15378"/>
        <dbReference type="ChEBI" id="CHEBI:17757"/>
        <dbReference type="ChEBI" id="CHEBI:57540"/>
        <dbReference type="ChEBI" id="CHEBI:57945"/>
        <dbReference type="ChEBI" id="CHEBI:62192"/>
    </reaction>
</comment>
<comment type="catalytic activity">
    <reaction evidence="1">
        <text>a plastoquinone + NADPH + (n+1) H(+)(in) = a plastoquinol + NADP(+) + n H(+)(out)</text>
        <dbReference type="Rhea" id="RHEA:42612"/>
        <dbReference type="Rhea" id="RHEA-COMP:9561"/>
        <dbReference type="Rhea" id="RHEA-COMP:9562"/>
        <dbReference type="ChEBI" id="CHEBI:15378"/>
        <dbReference type="ChEBI" id="CHEBI:17757"/>
        <dbReference type="ChEBI" id="CHEBI:57783"/>
        <dbReference type="ChEBI" id="CHEBI:58349"/>
        <dbReference type="ChEBI" id="CHEBI:62192"/>
    </reaction>
</comment>
<comment type="subunit">
    <text evidence="1">NDH is composed of at least 16 different subunits, 5 of which are encoded in the nucleus.</text>
</comment>
<comment type="subcellular location">
    <subcellularLocation>
        <location evidence="1">Plastid</location>
        <location evidence="1">Chloroplast thylakoid membrane</location>
        <topology evidence="1">Multi-pass membrane protein</topology>
    </subcellularLocation>
</comment>
<comment type="similarity">
    <text evidence="1">Belongs to the complex I subunit 3 family.</text>
</comment>
<organism>
    <name type="scientific">Oenothera argillicola</name>
    <name type="common">Appalachian evening primrose</name>
    <dbReference type="NCBI Taxonomy" id="3940"/>
    <lineage>
        <taxon>Eukaryota</taxon>
        <taxon>Viridiplantae</taxon>
        <taxon>Streptophyta</taxon>
        <taxon>Embryophyta</taxon>
        <taxon>Tracheophyta</taxon>
        <taxon>Spermatophyta</taxon>
        <taxon>Magnoliopsida</taxon>
        <taxon>eudicotyledons</taxon>
        <taxon>Gunneridae</taxon>
        <taxon>Pentapetalae</taxon>
        <taxon>rosids</taxon>
        <taxon>malvids</taxon>
        <taxon>Myrtales</taxon>
        <taxon>Onagraceae</taxon>
        <taxon>Onagroideae</taxon>
        <taxon>Onagreae</taxon>
        <taxon>Oenothera</taxon>
    </lineage>
</organism>
<feature type="chain" id="PRO_0000362857" description="NAD(P)H-quinone oxidoreductase subunit 3, chloroplastic">
    <location>
        <begin position="1"/>
        <end position="120"/>
    </location>
</feature>
<feature type="transmembrane region" description="Helical" evidence="1">
    <location>
        <begin position="2"/>
        <end position="22"/>
    </location>
</feature>
<feature type="transmembrane region" description="Helical" evidence="1">
    <location>
        <begin position="64"/>
        <end position="84"/>
    </location>
</feature>
<feature type="transmembrane region" description="Helical" evidence="1">
    <location>
        <begin position="88"/>
        <end position="108"/>
    </location>
</feature>
<keyword id="KW-0150">Chloroplast</keyword>
<keyword id="KW-0472">Membrane</keyword>
<keyword id="KW-0520">NAD</keyword>
<keyword id="KW-0521">NADP</keyword>
<keyword id="KW-0934">Plastid</keyword>
<keyword id="KW-0618">Plastoquinone</keyword>
<keyword id="KW-0874">Quinone</keyword>
<keyword id="KW-0793">Thylakoid</keyword>
<keyword id="KW-1278">Translocase</keyword>
<keyword id="KW-0812">Transmembrane</keyword>
<keyword id="KW-1133">Transmembrane helix</keyword>
<keyword id="KW-0813">Transport</keyword>
<protein>
    <recommendedName>
        <fullName evidence="1">NAD(P)H-quinone oxidoreductase subunit 3, chloroplastic</fullName>
        <ecNumber evidence="1">7.1.1.-</ecNumber>
    </recommendedName>
    <alternativeName>
        <fullName evidence="1">NAD(P)H dehydrogenase subunit 3</fullName>
    </alternativeName>
    <alternativeName>
        <fullName evidence="1">NADH-plastoquinone oxidoreductase subunit 3</fullName>
    </alternativeName>
</protein>
<proteinExistence type="inferred from homology"/>
<evidence type="ECO:0000255" key="1">
    <source>
        <dbReference type="HAMAP-Rule" id="MF_01394"/>
    </source>
</evidence>
<dbReference type="EC" id="7.1.1.-" evidence="1"/>
<dbReference type="EMBL" id="EU262887">
    <property type="protein sequence ID" value="ABW98690.1"/>
    <property type="molecule type" value="Genomic_DNA"/>
</dbReference>
<dbReference type="RefSeq" id="YP_001687123.1">
    <property type="nucleotide sequence ID" value="NC_010358.2"/>
</dbReference>
<dbReference type="SMR" id="B0Z4L2"/>
<dbReference type="GeneID" id="5951932"/>
<dbReference type="GO" id="GO:0009535">
    <property type="term" value="C:chloroplast thylakoid membrane"/>
    <property type="evidence" value="ECO:0007669"/>
    <property type="project" value="UniProtKB-SubCell"/>
</dbReference>
<dbReference type="GO" id="GO:0030964">
    <property type="term" value="C:NADH dehydrogenase complex"/>
    <property type="evidence" value="ECO:0007669"/>
    <property type="project" value="TreeGrafter"/>
</dbReference>
<dbReference type="GO" id="GO:0008137">
    <property type="term" value="F:NADH dehydrogenase (ubiquinone) activity"/>
    <property type="evidence" value="ECO:0007669"/>
    <property type="project" value="InterPro"/>
</dbReference>
<dbReference type="GO" id="GO:0048038">
    <property type="term" value="F:quinone binding"/>
    <property type="evidence" value="ECO:0007669"/>
    <property type="project" value="UniProtKB-KW"/>
</dbReference>
<dbReference type="GO" id="GO:0019684">
    <property type="term" value="P:photosynthesis, light reaction"/>
    <property type="evidence" value="ECO:0007669"/>
    <property type="project" value="UniProtKB-UniRule"/>
</dbReference>
<dbReference type="FunFam" id="1.20.58.1610:FF:000001">
    <property type="entry name" value="NAD(P)H-quinone oxidoreductase subunit 3, chloroplastic"/>
    <property type="match status" value="1"/>
</dbReference>
<dbReference type="Gene3D" id="1.20.58.1610">
    <property type="entry name" value="NADH:ubiquinone/plastoquinone oxidoreductase, chain 3"/>
    <property type="match status" value="1"/>
</dbReference>
<dbReference type="HAMAP" id="MF_01394">
    <property type="entry name" value="NDH1_NuoA"/>
    <property type="match status" value="1"/>
</dbReference>
<dbReference type="InterPro" id="IPR023043">
    <property type="entry name" value="NAD(P)H_OxRDtase_bac/plastid"/>
</dbReference>
<dbReference type="InterPro" id="IPR000440">
    <property type="entry name" value="NADH_UbQ/plastoQ_OxRdtase_su3"/>
</dbReference>
<dbReference type="InterPro" id="IPR038430">
    <property type="entry name" value="NDAH_ubi_oxred_su3_sf"/>
</dbReference>
<dbReference type="PANTHER" id="PTHR11058">
    <property type="entry name" value="NADH-UBIQUINONE OXIDOREDUCTASE CHAIN 3"/>
    <property type="match status" value="1"/>
</dbReference>
<dbReference type="PANTHER" id="PTHR11058:SF9">
    <property type="entry name" value="NADH-UBIQUINONE OXIDOREDUCTASE CHAIN 3"/>
    <property type="match status" value="1"/>
</dbReference>
<dbReference type="Pfam" id="PF00507">
    <property type="entry name" value="Oxidored_q4"/>
    <property type="match status" value="1"/>
</dbReference>
<geneLocation type="chloroplast"/>
<sequence>MFLLYEYDIFWAFLIISSVIPILAFRISGLLAPTSKGPEKLSSYESGIEPMGDAWLQFRIRYYMFALVFVVFDVETIFLYPWALSFDILGVSVFIEALIFVLILVLGLVYAWRKGALEWS</sequence>
<name>NU3C_OENAR</name>
<accession>B0Z4L2</accession>